<accession>Q2GVC2</accession>
<dbReference type="EMBL" id="CH408033">
    <property type="protein sequence ID" value="EAQ86829.1"/>
    <property type="molecule type" value="Genomic_DNA"/>
</dbReference>
<dbReference type="RefSeq" id="XP_001225738.1">
    <property type="nucleotide sequence ID" value="XM_001225737.1"/>
</dbReference>
<dbReference type="SMR" id="Q2GVC2"/>
<dbReference type="FunCoup" id="Q2GVC2">
    <property type="interactions" value="102"/>
</dbReference>
<dbReference type="STRING" id="306901.Q2GVC2"/>
<dbReference type="GeneID" id="4394551"/>
<dbReference type="VEuPathDB" id="FungiDB:CHGG_08082"/>
<dbReference type="eggNOG" id="ENOG502RZQQ">
    <property type="taxonomic scope" value="Eukaryota"/>
</dbReference>
<dbReference type="HOGENOM" id="CLU_081350_0_0_1"/>
<dbReference type="InParanoid" id="Q2GVC2"/>
<dbReference type="OMA" id="ENWKIWA"/>
<dbReference type="OrthoDB" id="5542239at2759"/>
<dbReference type="Proteomes" id="UP000001056">
    <property type="component" value="Unassembled WGS sequence"/>
</dbReference>
<dbReference type="GO" id="GO:0005763">
    <property type="term" value="C:mitochondrial small ribosomal subunit"/>
    <property type="evidence" value="ECO:0007669"/>
    <property type="project" value="InterPro"/>
</dbReference>
<dbReference type="GO" id="GO:0003735">
    <property type="term" value="F:structural constituent of ribosome"/>
    <property type="evidence" value="ECO:0007669"/>
    <property type="project" value="InterPro"/>
</dbReference>
<dbReference type="CDD" id="cd23701">
    <property type="entry name" value="At1g26750"/>
    <property type="match status" value="1"/>
</dbReference>
<dbReference type="InterPro" id="IPR016939">
    <property type="entry name" value="Ribosomal_mS23_fun"/>
</dbReference>
<dbReference type="PANTHER" id="PTHR37799">
    <property type="entry name" value="37S RIBOSOMAL PROTEIN S25, MITOCHONDRIAL"/>
    <property type="match status" value="1"/>
</dbReference>
<dbReference type="PANTHER" id="PTHR37799:SF1">
    <property type="entry name" value="SMALL RIBOSOMAL SUBUNIT PROTEIN MS23"/>
    <property type="match status" value="1"/>
</dbReference>
<dbReference type="Pfam" id="PF13741">
    <property type="entry name" value="MRP-S25"/>
    <property type="match status" value="1"/>
</dbReference>
<dbReference type="PIRSF" id="PIRSF029764">
    <property type="entry name" value="RSM25"/>
    <property type="match status" value="1"/>
</dbReference>
<sequence length="235" mass="27593">MVRGRQFLAARVYDTARAGMSSTIIQNTRPNVPMWLKALDHIPPAEVLTRPYPIQHTEPKDRGRAAQRPRNLFRPTKIVHPEDQLRQEFYRDHPWELARPKLVLELDGQDARRRDWSKGLRQPGMAVVQRQLWYMEVRGLSKARAYDVARKEFYKLRQQEEIERRVAVEEARMYGAYFGKNNLQVGMELEDAAYEQWKKWATIEISKLEAERTAAYANVVDTVTEPAEDDEEELL</sequence>
<gene>
    <name type="primary">RSM25</name>
    <name type="ORF">CHGG_08082</name>
</gene>
<organism>
    <name type="scientific">Chaetomium globosum (strain ATCC 6205 / CBS 148.51 / DSM 1962 / NBRC 6347 / NRRL 1970)</name>
    <name type="common">Soil fungus</name>
    <dbReference type="NCBI Taxonomy" id="306901"/>
    <lineage>
        <taxon>Eukaryota</taxon>
        <taxon>Fungi</taxon>
        <taxon>Dikarya</taxon>
        <taxon>Ascomycota</taxon>
        <taxon>Pezizomycotina</taxon>
        <taxon>Sordariomycetes</taxon>
        <taxon>Sordariomycetidae</taxon>
        <taxon>Sordariales</taxon>
        <taxon>Chaetomiaceae</taxon>
        <taxon>Chaetomium</taxon>
    </lineage>
</organism>
<protein>
    <recommendedName>
        <fullName evidence="3">Small ribosomal subunit protein mS23</fullName>
    </recommendedName>
    <alternativeName>
        <fullName>37S ribosomal protein S25, mitochondrial</fullName>
    </alternativeName>
</protein>
<comment type="subunit">
    <text evidence="1">Component of the mitochondrial small ribosomal subunit.</text>
</comment>
<comment type="subcellular location">
    <subcellularLocation>
        <location evidence="1">Mitochondrion</location>
    </subcellularLocation>
</comment>
<comment type="similarity">
    <text evidence="3">Belongs to the mitochondrion-specific ribosomal protein mS23 family.</text>
</comment>
<evidence type="ECO:0000250" key="1"/>
<evidence type="ECO:0000256" key="2">
    <source>
        <dbReference type="SAM" id="MobiDB-lite"/>
    </source>
</evidence>
<evidence type="ECO:0000305" key="3"/>
<name>RT25_CHAGB</name>
<feature type="chain" id="PRO_0000343548" description="Small ribosomal subunit protein mS23">
    <location>
        <begin position="1"/>
        <end position="235"/>
    </location>
</feature>
<feature type="region of interest" description="Disordered" evidence="2">
    <location>
        <begin position="51"/>
        <end position="71"/>
    </location>
</feature>
<reference key="1">
    <citation type="journal article" date="2015" name="Genome Announc.">
        <title>Draft genome sequence of the cellulolytic fungus Chaetomium globosum.</title>
        <authorList>
            <person name="Cuomo C.A."/>
            <person name="Untereiner W.A."/>
            <person name="Ma L.-J."/>
            <person name="Grabherr M."/>
            <person name="Birren B.W."/>
        </authorList>
    </citation>
    <scope>NUCLEOTIDE SEQUENCE [LARGE SCALE GENOMIC DNA]</scope>
    <source>
        <strain>ATCC 6205 / CBS 148.51 / DSM 1962 / NBRC 6347 / NRRL 1970</strain>
    </source>
</reference>
<proteinExistence type="inferred from homology"/>
<keyword id="KW-0496">Mitochondrion</keyword>
<keyword id="KW-1185">Reference proteome</keyword>
<keyword id="KW-0687">Ribonucleoprotein</keyword>
<keyword id="KW-0689">Ribosomal protein</keyword>